<proteinExistence type="evidence at protein level"/>
<accession>P31446</accession>
<accession>Q2M7Z0</accession>
<feature type="chain" id="PRO_0000169632" description="Inner membrane protein YidI">
    <location>
        <begin position="1"/>
        <end position="149"/>
    </location>
</feature>
<feature type="topological domain" description="Cytoplasmic" evidence="1">
    <location>
        <begin position="1"/>
        <end position="8"/>
    </location>
</feature>
<feature type="transmembrane region" description="Helical" evidence="1">
    <location>
        <begin position="9"/>
        <end position="31"/>
    </location>
</feature>
<feature type="topological domain" description="Periplasmic" evidence="1">
    <location>
        <begin position="32"/>
        <end position="77"/>
    </location>
</feature>
<feature type="transmembrane region" description="Helical" evidence="1">
    <location>
        <begin position="78"/>
        <end position="97"/>
    </location>
</feature>
<feature type="topological domain" description="Cytoplasmic" evidence="1">
    <location>
        <begin position="98"/>
        <end position="117"/>
    </location>
</feature>
<feature type="transmembrane region" description="Helical" evidence="1">
    <location>
        <begin position="118"/>
        <end position="140"/>
    </location>
</feature>
<feature type="topological domain" description="Periplasmic" evidence="1">
    <location>
        <begin position="141"/>
        <end position="149"/>
    </location>
</feature>
<sequence length="149" mass="15729">MGIIAQNKISSLGMLFGAIALMMGIIHFSFGPFSAPPPTFESIVADKTAEIKRGLLAGIKGEKITTVEKKEDVDVDKILNQSGIALAIAALLCAFIGGMRKENRWGIRGALVFGGGTLAFHTLLFGIGIVCSILLIFLIFSFLTGGSLV</sequence>
<keyword id="KW-0997">Cell inner membrane</keyword>
<keyword id="KW-1003">Cell membrane</keyword>
<keyword id="KW-0472">Membrane</keyword>
<keyword id="KW-1185">Reference proteome</keyword>
<keyword id="KW-0812">Transmembrane</keyword>
<keyword id="KW-1133">Transmembrane helix</keyword>
<comment type="subcellular location">
    <subcellularLocation>
        <location>Cell inner membrane</location>
        <topology>Multi-pass membrane protein</topology>
    </subcellularLocation>
</comment>
<organism>
    <name type="scientific">Escherichia coli (strain K12)</name>
    <dbReference type="NCBI Taxonomy" id="83333"/>
    <lineage>
        <taxon>Bacteria</taxon>
        <taxon>Pseudomonadati</taxon>
        <taxon>Pseudomonadota</taxon>
        <taxon>Gammaproteobacteria</taxon>
        <taxon>Enterobacterales</taxon>
        <taxon>Enterobacteriaceae</taxon>
        <taxon>Escherichia</taxon>
    </lineage>
</organism>
<name>YIDI_ECOLI</name>
<gene>
    <name type="primary">yidI</name>
    <name type="ordered locus">b3677</name>
    <name type="ordered locus">JW3653</name>
</gene>
<evidence type="ECO:0000255" key="1"/>
<dbReference type="EMBL" id="L10328">
    <property type="protein sequence ID" value="AAA62029.1"/>
    <property type="molecule type" value="Genomic_DNA"/>
</dbReference>
<dbReference type="EMBL" id="U00096">
    <property type="protein sequence ID" value="AAC76700.1"/>
    <property type="molecule type" value="Genomic_DNA"/>
</dbReference>
<dbReference type="EMBL" id="AP009048">
    <property type="protein sequence ID" value="BAE77616.1"/>
    <property type="molecule type" value="Genomic_DNA"/>
</dbReference>
<dbReference type="PIR" id="F65169">
    <property type="entry name" value="F65169"/>
</dbReference>
<dbReference type="RefSeq" id="NP_418133.1">
    <property type="nucleotide sequence ID" value="NC_000913.3"/>
</dbReference>
<dbReference type="RefSeq" id="WP_000511289.1">
    <property type="nucleotide sequence ID" value="NZ_SSZK01000035.1"/>
</dbReference>
<dbReference type="BioGRID" id="4262579">
    <property type="interactions" value="2"/>
</dbReference>
<dbReference type="FunCoup" id="P31446">
    <property type="interactions" value="14"/>
</dbReference>
<dbReference type="STRING" id="511145.b3677"/>
<dbReference type="PaxDb" id="511145-b3677"/>
<dbReference type="EnsemblBacteria" id="AAC76700">
    <property type="protein sequence ID" value="AAC76700"/>
    <property type="gene ID" value="b3677"/>
</dbReference>
<dbReference type="GeneID" id="948189"/>
<dbReference type="KEGG" id="ecj:JW3653"/>
<dbReference type="KEGG" id="eco:b3677"/>
<dbReference type="KEGG" id="ecoc:C3026_19940"/>
<dbReference type="PATRIC" id="fig|511145.12.peg.3798"/>
<dbReference type="EchoBASE" id="EB1648"/>
<dbReference type="eggNOG" id="ENOG5031ZXV">
    <property type="taxonomic scope" value="Bacteria"/>
</dbReference>
<dbReference type="HOGENOM" id="CLU_144193_0_0_6"/>
<dbReference type="InParanoid" id="P31446"/>
<dbReference type="OMA" id="AGACKEN"/>
<dbReference type="OrthoDB" id="6538452at2"/>
<dbReference type="BioCyc" id="EcoCyc:EG11697-MONOMER"/>
<dbReference type="PRO" id="PR:P31446"/>
<dbReference type="Proteomes" id="UP000000625">
    <property type="component" value="Chromosome"/>
</dbReference>
<dbReference type="GO" id="GO:0005886">
    <property type="term" value="C:plasma membrane"/>
    <property type="evidence" value="ECO:0000314"/>
    <property type="project" value="EcoCyc"/>
</dbReference>
<dbReference type="InterPro" id="IPR016512">
    <property type="entry name" value="Uncharacterised_IM_YidI"/>
</dbReference>
<dbReference type="PIRSF" id="PIRSF007312">
    <property type="entry name" value="Inner_membrane_protein_YidI"/>
    <property type="match status" value="1"/>
</dbReference>
<reference key="1">
    <citation type="journal article" date="1993" name="Genomics">
        <title>DNA sequence and analysis of 136 kilobases of the Escherichia coli genome: organizational symmetry around the origin of replication.</title>
        <authorList>
            <person name="Burland V.D."/>
            <person name="Plunkett G. III"/>
            <person name="Daniels D.L."/>
            <person name="Blattner F.R."/>
        </authorList>
    </citation>
    <scope>NUCLEOTIDE SEQUENCE [LARGE SCALE GENOMIC DNA]</scope>
    <source>
        <strain>K12 / MG1655 / ATCC 47076</strain>
    </source>
</reference>
<reference key="2">
    <citation type="journal article" date="1997" name="Science">
        <title>The complete genome sequence of Escherichia coli K-12.</title>
        <authorList>
            <person name="Blattner F.R."/>
            <person name="Plunkett G. III"/>
            <person name="Bloch C.A."/>
            <person name="Perna N.T."/>
            <person name="Burland V."/>
            <person name="Riley M."/>
            <person name="Collado-Vides J."/>
            <person name="Glasner J.D."/>
            <person name="Rode C.K."/>
            <person name="Mayhew G.F."/>
            <person name="Gregor J."/>
            <person name="Davis N.W."/>
            <person name="Kirkpatrick H.A."/>
            <person name="Goeden M.A."/>
            <person name="Rose D.J."/>
            <person name="Mau B."/>
            <person name="Shao Y."/>
        </authorList>
    </citation>
    <scope>NUCLEOTIDE SEQUENCE [LARGE SCALE GENOMIC DNA]</scope>
    <source>
        <strain>K12 / MG1655 / ATCC 47076</strain>
    </source>
</reference>
<reference key="3">
    <citation type="journal article" date="2006" name="Mol. Syst. Biol.">
        <title>Highly accurate genome sequences of Escherichia coli K-12 strains MG1655 and W3110.</title>
        <authorList>
            <person name="Hayashi K."/>
            <person name="Morooka N."/>
            <person name="Yamamoto Y."/>
            <person name="Fujita K."/>
            <person name="Isono K."/>
            <person name="Choi S."/>
            <person name="Ohtsubo E."/>
            <person name="Baba T."/>
            <person name="Wanner B.L."/>
            <person name="Mori H."/>
            <person name="Horiuchi T."/>
        </authorList>
    </citation>
    <scope>NUCLEOTIDE SEQUENCE [LARGE SCALE GENOMIC DNA]</scope>
    <source>
        <strain>K12 / W3110 / ATCC 27325 / DSM 5911</strain>
    </source>
</reference>
<reference key="4">
    <citation type="journal article" date="2005" name="Science">
        <title>Global topology analysis of the Escherichia coli inner membrane proteome.</title>
        <authorList>
            <person name="Daley D.O."/>
            <person name="Rapp M."/>
            <person name="Granseth E."/>
            <person name="Melen K."/>
            <person name="Drew D."/>
            <person name="von Heijne G."/>
        </authorList>
    </citation>
    <scope>TOPOLOGY [LARGE SCALE ANALYSIS]</scope>
    <source>
        <strain>K12 / MG1655 / ATCC 47076</strain>
    </source>
</reference>
<protein>
    <recommendedName>
        <fullName>Inner membrane protein YidI</fullName>
    </recommendedName>
</protein>